<gene>
    <name type="primary">rps8</name>
</gene>
<proteinExistence type="inferred from homology"/>
<reference key="1">
    <citation type="journal article" date="2007" name="Mol. Biol. Evol.">
        <title>Chloroplast genome (cpDNA) of Cycas taitungensis and 56 cp protein-coding genes of Gnetum parvifolium: insights into cpDNA evolution and phylogeny of extant seed plants.</title>
        <authorList>
            <person name="Wu C.-S."/>
            <person name="Wang Y.-N."/>
            <person name="Liu S.-M."/>
            <person name="Chaw S.-M."/>
        </authorList>
    </citation>
    <scope>NUCLEOTIDE SEQUENCE [LARGE SCALE GENOMIC DNA]</scope>
</reference>
<reference key="2">
    <citation type="journal article" date="2009" name="Mol. Phylogenet. Evol.">
        <title>Evolution of reduced and compact chloroplast genomes (cpDNAs) in gnetophytes: Selection toward a lower-cost strategy.</title>
        <authorList>
            <person name="Wu C.-S."/>
            <person name="Lai Y.-T."/>
            <person name="Lin C.-P."/>
            <person name="Wang Y.-N."/>
            <person name="Chaw S.-M."/>
        </authorList>
    </citation>
    <scope>NUCLEOTIDE SEQUENCE [LARGE SCALE GENOMIC DNA]</scope>
</reference>
<keyword id="KW-0150">Chloroplast</keyword>
<keyword id="KW-0934">Plastid</keyword>
<keyword id="KW-0687">Ribonucleoprotein</keyword>
<keyword id="KW-0689">Ribosomal protein</keyword>
<keyword id="KW-0694">RNA-binding</keyword>
<keyword id="KW-0699">rRNA-binding</keyword>
<evidence type="ECO:0000250" key="1"/>
<evidence type="ECO:0000305" key="2"/>
<geneLocation type="chloroplast"/>
<feature type="chain" id="PRO_0000305778" description="Small ribosomal subunit protein uS8c">
    <location>
        <begin position="1"/>
        <end position="128"/>
    </location>
</feature>
<dbReference type="EMBL" id="AB295952">
    <property type="protein sequence ID" value="BAF64901.1"/>
    <property type="molecule type" value="Genomic_DNA"/>
</dbReference>
<dbReference type="EMBL" id="AP009569">
    <property type="protein sequence ID" value="BAH11259.1"/>
    <property type="molecule type" value="Genomic_DNA"/>
</dbReference>
<dbReference type="RefSeq" id="YP_002519749.1">
    <property type="nucleotide sequence ID" value="NC_011942.1"/>
</dbReference>
<dbReference type="SMR" id="A6BM56"/>
<dbReference type="GeneID" id="7368171"/>
<dbReference type="GO" id="GO:0009507">
    <property type="term" value="C:chloroplast"/>
    <property type="evidence" value="ECO:0007669"/>
    <property type="project" value="UniProtKB-SubCell"/>
</dbReference>
<dbReference type="GO" id="GO:1990904">
    <property type="term" value="C:ribonucleoprotein complex"/>
    <property type="evidence" value="ECO:0007669"/>
    <property type="project" value="UniProtKB-KW"/>
</dbReference>
<dbReference type="GO" id="GO:0005840">
    <property type="term" value="C:ribosome"/>
    <property type="evidence" value="ECO:0007669"/>
    <property type="project" value="UniProtKB-KW"/>
</dbReference>
<dbReference type="GO" id="GO:0019843">
    <property type="term" value="F:rRNA binding"/>
    <property type="evidence" value="ECO:0007669"/>
    <property type="project" value="UniProtKB-UniRule"/>
</dbReference>
<dbReference type="GO" id="GO:0003735">
    <property type="term" value="F:structural constituent of ribosome"/>
    <property type="evidence" value="ECO:0007669"/>
    <property type="project" value="InterPro"/>
</dbReference>
<dbReference type="GO" id="GO:0006412">
    <property type="term" value="P:translation"/>
    <property type="evidence" value="ECO:0007669"/>
    <property type="project" value="UniProtKB-UniRule"/>
</dbReference>
<dbReference type="FunFam" id="3.30.1490.10:FF:000001">
    <property type="entry name" value="30S ribosomal protein S8"/>
    <property type="match status" value="1"/>
</dbReference>
<dbReference type="Gene3D" id="3.30.1370.30">
    <property type="match status" value="1"/>
</dbReference>
<dbReference type="Gene3D" id="3.30.1490.10">
    <property type="match status" value="1"/>
</dbReference>
<dbReference type="HAMAP" id="MF_01302_B">
    <property type="entry name" value="Ribosomal_uS8_B"/>
    <property type="match status" value="1"/>
</dbReference>
<dbReference type="InterPro" id="IPR000630">
    <property type="entry name" value="Ribosomal_uS8"/>
</dbReference>
<dbReference type="InterPro" id="IPR035987">
    <property type="entry name" value="Ribosomal_uS8_sf"/>
</dbReference>
<dbReference type="NCBIfam" id="NF001109">
    <property type="entry name" value="PRK00136.1"/>
    <property type="match status" value="1"/>
</dbReference>
<dbReference type="PANTHER" id="PTHR11758">
    <property type="entry name" value="40S RIBOSOMAL PROTEIN S15A"/>
    <property type="match status" value="1"/>
</dbReference>
<dbReference type="Pfam" id="PF00410">
    <property type="entry name" value="Ribosomal_S8"/>
    <property type="match status" value="1"/>
</dbReference>
<dbReference type="SUPFAM" id="SSF56047">
    <property type="entry name" value="Ribosomal protein S8"/>
    <property type="match status" value="1"/>
</dbReference>
<comment type="function">
    <text evidence="1">One of the primary rRNA binding proteins, it binds directly to 16S rRNA central domain where it helps coordinate assembly of the platform of the 30S subunit.</text>
</comment>
<comment type="subunit">
    <text evidence="1">Part of the 30S ribosomal subunit.</text>
</comment>
<comment type="subcellular location">
    <subcellularLocation>
        <location>Plastid</location>
        <location>Chloroplast</location>
    </subcellularLocation>
</comment>
<comment type="similarity">
    <text evidence="2">Belongs to the universal ribosomal protein uS8 family.</text>
</comment>
<name>RR8_GNEPA</name>
<organism>
    <name type="scientific">Gnetum parvifolium</name>
    <name type="common">Small-leaved jointfir</name>
    <name type="synonym">Gnetum scandens var. parvifolium</name>
    <dbReference type="NCBI Taxonomy" id="33153"/>
    <lineage>
        <taxon>Eukaryota</taxon>
        <taxon>Viridiplantae</taxon>
        <taxon>Streptophyta</taxon>
        <taxon>Embryophyta</taxon>
        <taxon>Tracheophyta</taxon>
        <taxon>Spermatophyta</taxon>
        <taxon>Gnetopsida</taxon>
        <taxon>Gnetidae</taxon>
        <taxon>Gnetales</taxon>
        <taxon>Gnetaceae</taxon>
        <taxon>Gnetum</taxon>
    </lineage>
</organism>
<sequence length="128" mass="14964">MDTITNLITSIKNAYMVKKQTVRVNATRINENFGRILLQEGFIRNIREHKDGQKFFLIFTLKYRKRGEKIITLKRISRPGWRIYSDFPKIPKVLGGMGIVILFTSQGIMTDREARKKKIGGELLCFVW</sequence>
<protein>
    <recommendedName>
        <fullName evidence="2">Small ribosomal subunit protein uS8c</fullName>
    </recommendedName>
    <alternativeName>
        <fullName>30S ribosomal protein S8, chloroplastic</fullName>
    </alternativeName>
</protein>
<accession>A6BM56</accession>
<accession>B7ZI79</accession>